<gene>
    <name type="ordered locus">lmo2392</name>
</gene>
<keyword id="KW-1185">Reference proteome</keyword>
<feature type="chain" id="PRO_0000165893" description="UPF0349 protein lmo2392">
    <location>
        <begin position="1"/>
        <end position="77"/>
    </location>
</feature>
<accession>Q8Y4P3</accession>
<comment type="similarity">
    <text evidence="1">Belongs to the UPF0349 family.</text>
</comment>
<reference key="1">
    <citation type="journal article" date="2001" name="Science">
        <title>Comparative genomics of Listeria species.</title>
        <authorList>
            <person name="Glaser P."/>
            <person name="Frangeul L."/>
            <person name="Buchrieser C."/>
            <person name="Rusniok C."/>
            <person name="Amend A."/>
            <person name="Baquero F."/>
            <person name="Berche P."/>
            <person name="Bloecker H."/>
            <person name="Brandt P."/>
            <person name="Chakraborty T."/>
            <person name="Charbit A."/>
            <person name="Chetouani F."/>
            <person name="Couve E."/>
            <person name="de Daruvar A."/>
            <person name="Dehoux P."/>
            <person name="Domann E."/>
            <person name="Dominguez-Bernal G."/>
            <person name="Duchaud E."/>
            <person name="Durant L."/>
            <person name="Dussurget O."/>
            <person name="Entian K.-D."/>
            <person name="Fsihi H."/>
            <person name="Garcia-del Portillo F."/>
            <person name="Garrido P."/>
            <person name="Gautier L."/>
            <person name="Goebel W."/>
            <person name="Gomez-Lopez N."/>
            <person name="Hain T."/>
            <person name="Hauf J."/>
            <person name="Jackson D."/>
            <person name="Jones L.-M."/>
            <person name="Kaerst U."/>
            <person name="Kreft J."/>
            <person name="Kuhn M."/>
            <person name="Kunst F."/>
            <person name="Kurapkat G."/>
            <person name="Madueno E."/>
            <person name="Maitournam A."/>
            <person name="Mata Vicente J."/>
            <person name="Ng E."/>
            <person name="Nedjari H."/>
            <person name="Nordsiek G."/>
            <person name="Novella S."/>
            <person name="de Pablos B."/>
            <person name="Perez-Diaz J.-C."/>
            <person name="Purcell R."/>
            <person name="Remmel B."/>
            <person name="Rose M."/>
            <person name="Schlueter T."/>
            <person name="Simoes N."/>
            <person name="Tierrez A."/>
            <person name="Vazquez-Boland J.-A."/>
            <person name="Voss H."/>
            <person name="Wehland J."/>
            <person name="Cossart P."/>
        </authorList>
    </citation>
    <scope>NUCLEOTIDE SEQUENCE [LARGE SCALE GENOMIC DNA]</scope>
    <source>
        <strain>ATCC BAA-679 / EGD-e</strain>
    </source>
</reference>
<organism>
    <name type="scientific">Listeria monocytogenes serovar 1/2a (strain ATCC BAA-679 / EGD-e)</name>
    <dbReference type="NCBI Taxonomy" id="169963"/>
    <lineage>
        <taxon>Bacteria</taxon>
        <taxon>Bacillati</taxon>
        <taxon>Bacillota</taxon>
        <taxon>Bacilli</taxon>
        <taxon>Bacillales</taxon>
        <taxon>Listeriaceae</taxon>
        <taxon>Listeria</taxon>
    </lineage>
</organism>
<proteinExistence type="inferred from homology"/>
<protein>
    <recommendedName>
        <fullName evidence="1">UPF0349 protein lmo2392</fullName>
    </recommendedName>
</protein>
<name>Y2392_LISMO</name>
<evidence type="ECO:0000255" key="1">
    <source>
        <dbReference type="HAMAP-Rule" id="MF_01542"/>
    </source>
</evidence>
<sequence length="77" mass="8416">MNPIVEFCVNNLASGADAAFAKLDADDNLDVIEYDCLTYCDLCATSLFALVDGEVVRGETAEELVANIYTFLEENPF</sequence>
<dbReference type="EMBL" id="AL591983">
    <property type="protein sequence ID" value="CAD00470.1"/>
    <property type="molecule type" value="Genomic_DNA"/>
</dbReference>
<dbReference type="PIR" id="AH1373">
    <property type="entry name" value="AH1373"/>
</dbReference>
<dbReference type="RefSeq" id="NP_465915.1">
    <property type="nucleotide sequence ID" value="NC_003210.1"/>
</dbReference>
<dbReference type="RefSeq" id="WP_003722418.1">
    <property type="nucleotide sequence ID" value="NZ_CP149495.1"/>
</dbReference>
<dbReference type="SMR" id="Q8Y4P3"/>
<dbReference type="STRING" id="169963.gene:17595102"/>
<dbReference type="PaxDb" id="169963-lmo2392"/>
<dbReference type="EnsemblBacteria" id="CAD00470">
    <property type="protein sequence ID" value="CAD00470"/>
    <property type="gene ID" value="CAD00470"/>
</dbReference>
<dbReference type="GeneID" id="987541"/>
<dbReference type="KEGG" id="lmo:lmo2392"/>
<dbReference type="PATRIC" id="fig|169963.11.peg.2450"/>
<dbReference type="eggNOG" id="COG4844">
    <property type="taxonomic scope" value="Bacteria"/>
</dbReference>
<dbReference type="HOGENOM" id="CLU_182025_0_0_9"/>
<dbReference type="OrthoDB" id="1684419at2"/>
<dbReference type="PhylomeDB" id="Q8Y4P3"/>
<dbReference type="BioCyc" id="LMON169963:LMO2392-MONOMER"/>
<dbReference type="Proteomes" id="UP000000817">
    <property type="component" value="Chromosome"/>
</dbReference>
<dbReference type="HAMAP" id="MF_01542">
    <property type="entry name" value="UPF0349"/>
    <property type="match status" value="1"/>
</dbReference>
<dbReference type="InterPro" id="IPR009910">
    <property type="entry name" value="DUF1450"/>
</dbReference>
<dbReference type="InterPro" id="IPR022916">
    <property type="entry name" value="UPF0349"/>
</dbReference>
<dbReference type="NCBIfam" id="NF010190">
    <property type="entry name" value="PRK13669.1"/>
    <property type="match status" value="1"/>
</dbReference>
<dbReference type="Pfam" id="PF07293">
    <property type="entry name" value="DUF1450"/>
    <property type="match status" value="1"/>
</dbReference>